<protein>
    <recommendedName>
        <fullName>S-crystallin SL11</fullName>
    </recommendedName>
    <alternativeName>
        <fullName>Major lens polypeptide</fullName>
    </alternativeName>
</protein>
<name>SCR11_NOTSL</name>
<keyword id="KW-0273">Eye lens protein</keyword>
<comment type="function">
    <text>S-crystallins are structural components of squids and octopi eye lens. Contains relatively little if any GST activity.</text>
</comment>
<comment type="tissue specificity">
    <text>Lens.</text>
</comment>
<comment type="similarity">
    <text evidence="1">Belongs to the GST superfamily.</text>
</comment>
<evidence type="ECO:0000305" key="1"/>
<proteinExistence type="evidence at transcript level"/>
<sequence>MPSYTLYYFNGRGRAEICRMLFAVASVQYQDKRIELAEWTQFKTKMPCHMLPILEIDTETQVPQSMAISRYLAREFGFYGKNNMDMFKVDCLCDSLFELFNDYMAVYNEKDAAKKTELQKRFQNTCLRVLPYMEKTLEANKGGAGWFIGDQILLCDMMTHAALENPIQENANLLKEYPKLAALRTRVAAHPKIAAYIKKRNNTAF</sequence>
<reference key="1">
    <citation type="journal article" date="1988" name="Nature">
        <title>Squid major lens polypeptides are homologous to glutathione S-transferases subunits.</title>
        <authorList>
            <person name="Tomarev S.I."/>
            <person name="Zinovieva R.D."/>
        </authorList>
    </citation>
    <scope>NUCLEOTIDE SEQUENCE [MRNA]</scope>
</reference>
<reference key="2">
    <citation type="journal article" date="1992" name="J. Biol. Chem.">
        <title>Characterization of squid crystallin genes. Comparison with mammalian glutathione S-transferase genes.</title>
        <authorList>
            <person name="Tomarev S.I."/>
            <person name="Zinovieva R.D."/>
            <person name="Piatigorsky J."/>
        </authorList>
    </citation>
    <scope>NUCLEOTIDE SEQUENCE [GENOMIC DNA]</scope>
</reference>
<organism>
    <name type="scientific">Nototodarus sloanii</name>
    <name type="common">Wellington flying squid</name>
    <name type="synonym">Ommastrephes sloanei</name>
    <dbReference type="NCBI Taxonomy" id="215440"/>
    <lineage>
        <taxon>Eukaryota</taxon>
        <taxon>Metazoa</taxon>
        <taxon>Spiralia</taxon>
        <taxon>Lophotrochozoa</taxon>
        <taxon>Mollusca</taxon>
        <taxon>Cephalopoda</taxon>
        <taxon>Coleoidea</taxon>
        <taxon>Decapodiformes</taxon>
        <taxon>Oegopsida</taxon>
        <taxon>Ommastrephidae</taxon>
        <taxon>Nototodarus</taxon>
    </lineage>
</organism>
<dbReference type="EMBL" id="M36938">
    <property type="protein sequence ID" value="AAA63411.1"/>
    <property type="molecule type" value="mRNA"/>
</dbReference>
<dbReference type="EMBL" id="M74325">
    <property type="protein sequence ID" value="AAA29403.1"/>
    <property type="molecule type" value="Genomic_DNA"/>
</dbReference>
<dbReference type="EMBL" id="M74321">
    <property type="protein sequence ID" value="AAA29403.1"/>
    <property type="status" value="JOINED"/>
    <property type="molecule type" value="Genomic_DNA"/>
</dbReference>
<dbReference type="EMBL" id="M74322">
    <property type="protein sequence ID" value="AAA29403.1"/>
    <property type="status" value="JOINED"/>
    <property type="molecule type" value="Genomic_DNA"/>
</dbReference>
<dbReference type="EMBL" id="M74323">
    <property type="protein sequence ID" value="AAA29403.1"/>
    <property type="status" value="JOINED"/>
    <property type="molecule type" value="Genomic_DNA"/>
</dbReference>
<dbReference type="EMBL" id="M74324">
    <property type="protein sequence ID" value="AAA29403.1"/>
    <property type="status" value="JOINED"/>
    <property type="molecule type" value="Genomic_DNA"/>
</dbReference>
<dbReference type="PIR" id="S06867">
    <property type="entry name" value="S06867"/>
</dbReference>
<dbReference type="SMR" id="P18426"/>
<dbReference type="GO" id="GO:0004364">
    <property type="term" value="F:glutathione transferase activity"/>
    <property type="evidence" value="ECO:0007669"/>
    <property type="project" value="TreeGrafter"/>
</dbReference>
<dbReference type="GO" id="GO:0005212">
    <property type="term" value="F:structural constituent of eye lens"/>
    <property type="evidence" value="ECO:0007669"/>
    <property type="project" value="UniProtKB-KW"/>
</dbReference>
<dbReference type="GO" id="GO:0006749">
    <property type="term" value="P:glutathione metabolic process"/>
    <property type="evidence" value="ECO:0007669"/>
    <property type="project" value="TreeGrafter"/>
</dbReference>
<dbReference type="CDD" id="cd03192">
    <property type="entry name" value="GST_C_Sigma_like"/>
    <property type="match status" value="1"/>
</dbReference>
<dbReference type="CDD" id="cd03039">
    <property type="entry name" value="GST_N_Sigma_like"/>
    <property type="match status" value="1"/>
</dbReference>
<dbReference type="FunFam" id="1.20.1050.10:FF:000030">
    <property type="entry name" value="Glutathione S-transferase S1"/>
    <property type="match status" value="1"/>
</dbReference>
<dbReference type="FunFam" id="3.40.30.10:FF:000035">
    <property type="entry name" value="hematopoietic prostaglandin D synthase"/>
    <property type="match status" value="1"/>
</dbReference>
<dbReference type="Gene3D" id="1.20.1050.10">
    <property type="match status" value="1"/>
</dbReference>
<dbReference type="Gene3D" id="3.40.30.10">
    <property type="entry name" value="Glutaredoxin"/>
    <property type="match status" value="1"/>
</dbReference>
<dbReference type="InterPro" id="IPR010987">
    <property type="entry name" value="Glutathione-S-Trfase_C-like"/>
</dbReference>
<dbReference type="InterPro" id="IPR036282">
    <property type="entry name" value="Glutathione-S-Trfase_C_sf"/>
</dbReference>
<dbReference type="InterPro" id="IPR004045">
    <property type="entry name" value="Glutathione_S-Trfase_N"/>
</dbReference>
<dbReference type="InterPro" id="IPR004046">
    <property type="entry name" value="GST_C"/>
</dbReference>
<dbReference type="InterPro" id="IPR050213">
    <property type="entry name" value="GST_superfamily"/>
</dbReference>
<dbReference type="InterPro" id="IPR003083">
    <property type="entry name" value="S-crystallin"/>
</dbReference>
<dbReference type="InterPro" id="IPR036249">
    <property type="entry name" value="Thioredoxin-like_sf"/>
</dbReference>
<dbReference type="PANTHER" id="PTHR11571">
    <property type="entry name" value="GLUTATHIONE S-TRANSFERASE"/>
    <property type="match status" value="1"/>
</dbReference>
<dbReference type="PANTHER" id="PTHR11571:SF150">
    <property type="entry name" value="GLUTATHIONE S-TRANSFERASE"/>
    <property type="match status" value="1"/>
</dbReference>
<dbReference type="Pfam" id="PF14497">
    <property type="entry name" value="GST_C_3"/>
    <property type="match status" value="1"/>
</dbReference>
<dbReference type="Pfam" id="PF02798">
    <property type="entry name" value="GST_N"/>
    <property type="match status" value="1"/>
</dbReference>
<dbReference type="PRINTS" id="PR01269">
    <property type="entry name" value="SCRYSTALLIN"/>
</dbReference>
<dbReference type="SFLD" id="SFLDG01205">
    <property type="entry name" value="AMPS.1"/>
    <property type="match status" value="1"/>
</dbReference>
<dbReference type="SFLD" id="SFLDG00363">
    <property type="entry name" value="AMPS_(cytGST):_Alpha-__Mu-__Pi"/>
    <property type="match status" value="1"/>
</dbReference>
<dbReference type="SUPFAM" id="SSF47616">
    <property type="entry name" value="GST C-terminal domain-like"/>
    <property type="match status" value="1"/>
</dbReference>
<dbReference type="SUPFAM" id="SSF52833">
    <property type="entry name" value="Thioredoxin-like"/>
    <property type="match status" value="1"/>
</dbReference>
<dbReference type="PROSITE" id="PS50405">
    <property type="entry name" value="GST_CTER"/>
    <property type="match status" value="1"/>
</dbReference>
<dbReference type="PROSITE" id="PS50404">
    <property type="entry name" value="GST_NTER"/>
    <property type="match status" value="1"/>
</dbReference>
<feature type="chain" id="PRO_0000186000" description="S-crystallin SL11">
    <location>
        <begin position="1"/>
        <end position="205"/>
    </location>
</feature>
<feature type="domain" description="GST N-terminal">
    <location>
        <begin position="2"/>
        <end position="80"/>
    </location>
</feature>
<feature type="domain" description="GST C-terminal">
    <location>
        <begin position="82"/>
        <end position="205"/>
    </location>
</feature>
<feature type="sequence conflict" description="In Ref. 2; AAA29403." evidence="1" ref="2">
    <original>T</original>
    <variation>H</variation>
    <location>
        <position position="44"/>
    </location>
</feature>
<accession>P18426</accession>